<accession>B6YR05</accession>
<feature type="chain" id="PRO_1000134107" description="ATP synthase gamma chain">
    <location>
        <begin position="1"/>
        <end position="289"/>
    </location>
</feature>
<proteinExistence type="inferred from homology"/>
<sequence length="289" mass="33447">MPSLKEIKERITSIKSTQKITSAMKMLASSKLKKAQYQMNCFLPYQRKLNAMLNSFLFCITDFKSDLTKKREIKRIALVIFSSNTSLCGTFNSNIIKLFNETISKYRYLNQKDIEVYTVGKKIEDYVRKLTFPLKVEGNYTQLIEKPNFARLKQLADKLLSDFLNQKIDKVELLYNHCKNAIFQTTNLEPYLPIQMKQPKSTSHADYIIEPDRDTVLNTLILRSLYSKIYAVLLNSVIAEHTARLVSMQIAIDNADEILEELTIQHNKQRQQTITNDLLDIISSSEALK</sequence>
<gene>
    <name evidence="1" type="primary">atpG</name>
    <name type="ordered locus">CFPG_364</name>
</gene>
<dbReference type="EMBL" id="AP010656">
    <property type="protein sequence ID" value="BAG83627.1"/>
    <property type="molecule type" value="Genomic_DNA"/>
</dbReference>
<dbReference type="RefSeq" id="WP_012573388.1">
    <property type="nucleotide sequence ID" value="NC_011565.1"/>
</dbReference>
<dbReference type="SMR" id="B6YR05"/>
<dbReference type="STRING" id="511995.CFPG_364"/>
<dbReference type="KEGG" id="aps:CFPG_364"/>
<dbReference type="eggNOG" id="COG0224">
    <property type="taxonomic scope" value="Bacteria"/>
</dbReference>
<dbReference type="HOGENOM" id="CLU_050669_0_1_10"/>
<dbReference type="OrthoDB" id="9812769at2"/>
<dbReference type="Proteomes" id="UP000000723">
    <property type="component" value="Chromosome"/>
</dbReference>
<dbReference type="GO" id="GO:0005886">
    <property type="term" value="C:plasma membrane"/>
    <property type="evidence" value="ECO:0007669"/>
    <property type="project" value="UniProtKB-SubCell"/>
</dbReference>
<dbReference type="GO" id="GO:0045259">
    <property type="term" value="C:proton-transporting ATP synthase complex"/>
    <property type="evidence" value="ECO:0007669"/>
    <property type="project" value="UniProtKB-KW"/>
</dbReference>
<dbReference type="GO" id="GO:0005524">
    <property type="term" value="F:ATP binding"/>
    <property type="evidence" value="ECO:0007669"/>
    <property type="project" value="UniProtKB-UniRule"/>
</dbReference>
<dbReference type="GO" id="GO:0046933">
    <property type="term" value="F:proton-transporting ATP synthase activity, rotational mechanism"/>
    <property type="evidence" value="ECO:0007669"/>
    <property type="project" value="UniProtKB-UniRule"/>
</dbReference>
<dbReference type="GO" id="GO:0042777">
    <property type="term" value="P:proton motive force-driven plasma membrane ATP synthesis"/>
    <property type="evidence" value="ECO:0007669"/>
    <property type="project" value="UniProtKB-UniRule"/>
</dbReference>
<dbReference type="CDD" id="cd12151">
    <property type="entry name" value="F1-ATPase_gamma"/>
    <property type="match status" value="1"/>
</dbReference>
<dbReference type="Gene3D" id="3.40.1380.10">
    <property type="match status" value="1"/>
</dbReference>
<dbReference type="Gene3D" id="1.10.287.80">
    <property type="entry name" value="ATP synthase, gamma subunit, helix hairpin domain"/>
    <property type="match status" value="1"/>
</dbReference>
<dbReference type="HAMAP" id="MF_00815">
    <property type="entry name" value="ATP_synth_gamma_bact"/>
    <property type="match status" value="1"/>
</dbReference>
<dbReference type="InterPro" id="IPR035968">
    <property type="entry name" value="ATP_synth_F1_ATPase_gsu"/>
</dbReference>
<dbReference type="InterPro" id="IPR000131">
    <property type="entry name" value="ATP_synth_F1_gsu"/>
</dbReference>
<dbReference type="NCBIfam" id="TIGR01146">
    <property type="entry name" value="ATPsyn_F1gamma"/>
    <property type="match status" value="1"/>
</dbReference>
<dbReference type="NCBIfam" id="NF009959">
    <property type="entry name" value="PRK13426.1"/>
    <property type="match status" value="1"/>
</dbReference>
<dbReference type="PANTHER" id="PTHR11693">
    <property type="entry name" value="ATP SYNTHASE GAMMA CHAIN"/>
    <property type="match status" value="1"/>
</dbReference>
<dbReference type="PANTHER" id="PTHR11693:SF22">
    <property type="entry name" value="ATP SYNTHASE SUBUNIT GAMMA, MITOCHONDRIAL"/>
    <property type="match status" value="1"/>
</dbReference>
<dbReference type="Pfam" id="PF00231">
    <property type="entry name" value="ATP-synt"/>
    <property type="match status" value="1"/>
</dbReference>
<dbReference type="PRINTS" id="PR00126">
    <property type="entry name" value="ATPASEGAMMA"/>
</dbReference>
<dbReference type="SUPFAM" id="SSF52943">
    <property type="entry name" value="ATP synthase (F1-ATPase), gamma subunit"/>
    <property type="match status" value="1"/>
</dbReference>
<protein>
    <recommendedName>
        <fullName evidence="1">ATP synthase gamma chain</fullName>
    </recommendedName>
    <alternativeName>
        <fullName evidence="1">ATP synthase F1 sector gamma subunit</fullName>
    </alternativeName>
    <alternativeName>
        <fullName evidence="1">F-ATPase gamma subunit</fullName>
    </alternativeName>
</protein>
<name>ATPG_AZOPC</name>
<keyword id="KW-0066">ATP synthesis</keyword>
<keyword id="KW-0997">Cell inner membrane</keyword>
<keyword id="KW-1003">Cell membrane</keyword>
<keyword id="KW-0139">CF(1)</keyword>
<keyword id="KW-0375">Hydrogen ion transport</keyword>
<keyword id="KW-0406">Ion transport</keyword>
<keyword id="KW-0472">Membrane</keyword>
<keyword id="KW-1185">Reference proteome</keyword>
<keyword id="KW-0813">Transport</keyword>
<evidence type="ECO:0000255" key="1">
    <source>
        <dbReference type="HAMAP-Rule" id="MF_00815"/>
    </source>
</evidence>
<reference key="1">
    <citation type="journal article" date="2008" name="Science">
        <title>Genome of an endosymbiont coupling N2 fixation to cellulolysis within RT protist cells in termite gut.</title>
        <authorList>
            <person name="Hongoh Y."/>
            <person name="Sharma V.K."/>
            <person name="Prakash T."/>
            <person name="Noda S."/>
            <person name="Toh H."/>
            <person name="Taylor T.D."/>
            <person name="Kudo T."/>
            <person name="Sakaki Y."/>
            <person name="Toyoda A."/>
            <person name="Hattori M."/>
            <person name="Ohkuma M."/>
        </authorList>
    </citation>
    <scope>NUCLEOTIDE SEQUENCE [LARGE SCALE GENOMIC DNA]</scope>
</reference>
<comment type="function">
    <text evidence="1">Produces ATP from ADP in the presence of a proton gradient across the membrane. The gamma chain is believed to be important in regulating ATPase activity and the flow of protons through the CF(0) complex.</text>
</comment>
<comment type="subunit">
    <text evidence="1">F-type ATPases have 2 components, CF(1) - the catalytic core - and CF(0) - the membrane proton channel. CF(1) has five subunits: alpha(3), beta(3), gamma(1), delta(1), epsilon(1). CF(0) has three main subunits: a, b and c.</text>
</comment>
<comment type="subcellular location">
    <subcellularLocation>
        <location evidence="1">Cell inner membrane</location>
        <topology evidence="1">Peripheral membrane protein</topology>
    </subcellularLocation>
</comment>
<comment type="similarity">
    <text evidence="1">Belongs to the ATPase gamma chain family.</text>
</comment>
<organism>
    <name type="scientific">Azobacteroides pseudotrichonymphae genomovar. CFP2</name>
    <dbReference type="NCBI Taxonomy" id="511995"/>
    <lineage>
        <taxon>Bacteria</taxon>
        <taxon>Pseudomonadati</taxon>
        <taxon>Bacteroidota</taxon>
        <taxon>Bacteroidia</taxon>
        <taxon>Bacteroidales</taxon>
        <taxon>Candidatus Azobacteroides</taxon>
    </lineage>
</organism>